<accession>C7P363</accession>
<gene>
    <name evidence="1" type="primary">cofC</name>
    <name type="ordered locus">Hmuk_1414</name>
</gene>
<comment type="function">
    <text evidence="1">Guanylyltransferase that catalyzes the activation of (2S)-2-phospholactate (2-PL) as (2S)-lactyl-2-diphospho-5'-guanosine, via the condensation of 2-PL with GTP. It is involved in the biosynthesis of coenzyme F420, a hydride carrier cofactor.</text>
</comment>
<comment type="catalytic activity">
    <reaction evidence="1">
        <text>(2S)-2-phospholactate + GTP + H(+) = (2S)-lactyl-2-diphospho-5'-guanosine + diphosphate</text>
        <dbReference type="Rhea" id="RHEA:63424"/>
        <dbReference type="ChEBI" id="CHEBI:15378"/>
        <dbReference type="ChEBI" id="CHEBI:33019"/>
        <dbReference type="ChEBI" id="CHEBI:37565"/>
        <dbReference type="ChEBI" id="CHEBI:59435"/>
        <dbReference type="ChEBI" id="CHEBI:59906"/>
        <dbReference type="EC" id="2.7.7.68"/>
    </reaction>
</comment>
<comment type="pathway">
    <text evidence="1">Cofactor biosynthesis; coenzyme F420 biosynthesis.</text>
</comment>
<comment type="subunit">
    <text evidence="1">Homodimer.</text>
</comment>
<comment type="similarity">
    <text evidence="1">Belongs to the CofC family.</text>
</comment>
<keyword id="KW-0342">GTP-binding</keyword>
<keyword id="KW-0547">Nucleotide-binding</keyword>
<keyword id="KW-0548">Nucleotidyltransferase</keyword>
<keyword id="KW-1185">Reference proteome</keyword>
<keyword id="KW-0808">Transferase</keyword>
<name>COFC_HALMD</name>
<feature type="chain" id="PRO_0000398729" description="2-phospho-L-lactate guanylyltransferase">
    <location>
        <begin position="1"/>
        <end position="203"/>
    </location>
</feature>
<sequence>MRVVVPFSATEPKTRLAPVLDADERRAFARVMLADVLDALDTVGVDPTVLATEAIDLDRPVTVDDRPLDAAINGLLAASDEPVAVVMADLALATPDALDRLFAAEGDVVLAPGRGGGTNAFVARHPDFRVDYHDASIRDHRRIARDAGGTVTEIDSYRLSTDVDEPADLAEVLLHGEGRAADWLRGAGVQLTVADGRTTVERP</sequence>
<reference key="1">
    <citation type="journal article" date="2009" name="Stand. Genomic Sci.">
        <title>Complete genome sequence of Halomicrobium mukohataei type strain (arg-2).</title>
        <authorList>
            <person name="Tindall B.J."/>
            <person name="Schneider S."/>
            <person name="Lapidus A."/>
            <person name="Copeland A."/>
            <person name="Glavina Del Rio T."/>
            <person name="Nolan M."/>
            <person name="Lucas S."/>
            <person name="Chen F."/>
            <person name="Tice H."/>
            <person name="Cheng J.F."/>
            <person name="Saunders E."/>
            <person name="Bruce D."/>
            <person name="Goodwin L."/>
            <person name="Pitluck S."/>
            <person name="Mikhailova N."/>
            <person name="Pati A."/>
            <person name="Ivanova N."/>
            <person name="Mavrommatis K."/>
            <person name="Chen A."/>
            <person name="Palaniappan K."/>
            <person name="Chain P."/>
            <person name="Land M."/>
            <person name="Hauser L."/>
            <person name="Chang Y.J."/>
            <person name="Jeffries C.D."/>
            <person name="Brettin T."/>
            <person name="Han C."/>
            <person name="Rohde M."/>
            <person name="Goker M."/>
            <person name="Bristow J."/>
            <person name="Eisen J.A."/>
            <person name="Markowitz V."/>
            <person name="Hugenholtz P."/>
            <person name="Klenk H.P."/>
            <person name="Kyrpides N.C."/>
            <person name="Detter J.C."/>
        </authorList>
    </citation>
    <scope>NUCLEOTIDE SEQUENCE [LARGE SCALE GENOMIC DNA]</scope>
    <source>
        <strain>ATCC 700874 / DSM 12286 / JCM 9738 / NCIMB 13541</strain>
    </source>
</reference>
<evidence type="ECO:0000255" key="1">
    <source>
        <dbReference type="HAMAP-Rule" id="MF_02114"/>
    </source>
</evidence>
<dbReference type="EC" id="2.7.7.68" evidence="1"/>
<dbReference type="EMBL" id="CP001688">
    <property type="protein sequence ID" value="ACV47535.1"/>
    <property type="molecule type" value="Genomic_DNA"/>
</dbReference>
<dbReference type="RefSeq" id="WP_015762381.1">
    <property type="nucleotide sequence ID" value="NC_013202.1"/>
</dbReference>
<dbReference type="SMR" id="C7P363"/>
<dbReference type="STRING" id="485914.Hmuk_1414"/>
<dbReference type="GeneID" id="42179315"/>
<dbReference type="GeneID" id="8410934"/>
<dbReference type="KEGG" id="hmu:Hmuk_1414"/>
<dbReference type="eggNOG" id="arCOG04472">
    <property type="taxonomic scope" value="Archaea"/>
</dbReference>
<dbReference type="HOGENOM" id="CLU_076569_2_0_2"/>
<dbReference type="OrthoDB" id="11179at2157"/>
<dbReference type="UniPathway" id="UPA00071"/>
<dbReference type="Proteomes" id="UP000001746">
    <property type="component" value="Chromosome"/>
</dbReference>
<dbReference type="GO" id="GO:0005525">
    <property type="term" value="F:GTP binding"/>
    <property type="evidence" value="ECO:0007669"/>
    <property type="project" value="UniProtKB-KW"/>
</dbReference>
<dbReference type="GO" id="GO:0043814">
    <property type="term" value="F:phospholactate guanylyltransferase activity"/>
    <property type="evidence" value="ECO:0007669"/>
    <property type="project" value="UniProtKB-EC"/>
</dbReference>
<dbReference type="GO" id="GO:0052645">
    <property type="term" value="P:F420-0 metabolic process"/>
    <property type="evidence" value="ECO:0007669"/>
    <property type="project" value="UniProtKB-UniRule"/>
</dbReference>
<dbReference type="Gene3D" id="6.10.140.50">
    <property type="match status" value="1"/>
</dbReference>
<dbReference type="Gene3D" id="3.90.550.10">
    <property type="entry name" value="Spore Coat Polysaccharide Biosynthesis Protein SpsA, Chain A"/>
    <property type="match status" value="1"/>
</dbReference>
<dbReference type="HAMAP" id="MF_02114">
    <property type="entry name" value="CofC"/>
    <property type="match status" value="1"/>
</dbReference>
<dbReference type="InterPro" id="IPR002835">
    <property type="entry name" value="CofC"/>
</dbReference>
<dbReference type="InterPro" id="IPR029044">
    <property type="entry name" value="Nucleotide-diphossugar_trans"/>
</dbReference>
<dbReference type="NCBIfam" id="TIGR03552">
    <property type="entry name" value="F420_cofC"/>
    <property type="match status" value="1"/>
</dbReference>
<dbReference type="PANTHER" id="PTHR40392">
    <property type="entry name" value="2-PHOSPHO-L-LACTATE GUANYLYLTRANSFERASE"/>
    <property type="match status" value="1"/>
</dbReference>
<dbReference type="PANTHER" id="PTHR40392:SF1">
    <property type="entry name" value="2-PHOSPHO-L-LACTATE GUANYLYLTRANSFERASE"/>
    <property type="match status" value="1"/>
</dbReference>
<dbReference type="Pfam" id="PF01983">
    <property type="entry name" value="CofC"/>
    <property type="match status" value="1"/>
</dbReference>
<dbReference type="SUPFAM" id="SSF53448">
    <property type="entry name" value="Nucleotide-diphospho-sugar transferases"/>
    <property type="match status" value="1"/>
</dbReference>
<protein>
    <recommendedName>
        <fullName evidence="1">2-phospho-L-lactate guanylyltransferase</fullName>
        <shortName evidence="1">LP guanylyltransferase</shortName>
        <ecNumber evidence="1">2.7.7.68</ecNumber>
    </recommendedName>
</protein>
<organism>
    <name type="scientific">Halomicrobium mukohataei (strain ATCC 700874 / DSM 12286 / JCM 9738 / NCIMB 13541)</name>
    <name type="common">Haloarcula mukohataei</name>
    <dbReference type="NCBI Taxonomy" id="485914"/>
    <lineage>
        <taxon>Archaea</taxon>
        <taxon>Methanobacteriati</taxon>
        <taxon>Methanobacteriota</taxon>
        <taxon>Stenosarchaea group</taxon>
        <taxon>Halobacteria</taxon>
        <taxon>Halobacteriales</taxon>
        <taxon>Haloarculaceae</taxon>
        <taxon>Halomicrobium</taxon>
    </lineage>
</organism>
<proteinExistence type="inferred from homology"/>